<dbReference type="EC" id="1.4.3.5" evidence="1"/>
<dbReference type="EMBL" id="CP000946">
    <property type="protein sequence ID" value="ACA77637.1"/>
    <property type="molecule type" value="Genomic_DNA"/>
</dbReference>
<dbReference type="RefSeq" id="WP_001282319.1">
    <property type="nucleotide sequence ID" value="NZ_MTFT01000006.1"/>
</dbReference>
<dbReference type="SMR" id="B1IQB6"/>
<dbReference type="GeneID" id="75171699"/>
<dbReference type="KEGG" id="ecl:EcolC_1991"/>
<dbReference type="HOGENOM" id="CLU_032263_2_2_6"/>
<dbReference type="UniPathway" id="UPA01068">
    <property type="reaction ID" value="UER00304"/>
</dbReference>
<dbReference type="UniPathway" id="UPA01068">
    <property type="reaction ID" value="UER00305"/>
</dbReference>
<dbReference type="GO" id="GO:0010181">
    <property type="term" value="F:FMN binding"/>
    <property type="evidence" value="ECO:0007669"/>
    <property type="project" value="UniProtKB-UniRule"/>
</dbReference>
<dbReference type="GO" id="GO:0004733">
    <property type="term" value="F:pyridoxamine phosphate oxidase activity"/>
    <property type="evidence" value="ECO:0007669"/>
    <property type="project" value="UniProtKB-UniRule"/>
</dbReference>
<dbReference type="GO" id="GO:0008615">
    <property type="term" value="P:pyridoxine biosynthetic process"/>
    <property type="evidence" value="ECO:0007669"/>
    <property type="project" value="UniProtKB-KW"/>
</dbReference>
<dbReference type="FunFam" id="2.30.110.10:FF:000001">
    <property type="entry name" value="Pyridoxine/pyridoxamine 5'-phosphate oxidase"/>
    <property type="match status" value="1"/>
</dbReference>
<dbReference type="Gene3D" id="2.30.110.10">
    <property type="entry name" value="Electron Transport, Fmn-binding Protein, Chain A"/>
    <property type="match status" value="1"/>
</dbReference>
<dbReference type="HAMAP" id="MF_01629">
    <property type="entry name" value="PdxH"/>
    <property type="match status" value="1"/>
</dbReference>
<dbReference type="InterPro" id="IPR000659">
    <property type="entry name" value="Pyridox_Oxase"/>
</dbReference>
<dbReference type="InterPro" id="IPR019740">
    <property type="entry name" value="Pyridox_Oxase_CS"/>
</dbReference>
<dbReference type="InterPro" id="IPR011576">
    <property type="entry name" value="Pyridox_Oxase_N"/>
</dbReference>
<dbReference type="InterPro" id="IPR019576">
    <property type="entry name" value="Pyridoxamine_oxidase_dimer_C"/>
</dbReference>
<dbReference type="InterPro" id="IPR012349">
    <property type="entry name" value="Split_barrel_FMN-bd"/>
</dbReference>
<dbReference type="NCBIfam" id="TIGR00558">
    <property type="entry name" value="pdxH"/>
    <property type="match status" value="1"/>
</dbReference>
<dbReference type="NCBIfam" id="NF004231">
    <property type="entry name" value="PRK05679.1"/>
    <property type="match status" value="1"/>
</dbReference>
<dbReference type="PANTHER" id="PTHR10851:SF0">
    <property type="entry name" value="PYRIDOXINE-5'-PHOSPHATE OXIDASE"/>
    <property type="match status" value="1"/>
</dbReference>
<dbReference type="PANTHER" id="PTHR10851">
    <property type="entry name" value="PYRIDOXINE-5-PHOSPHATE OXIDASE"/>
    <property type="match status" value="1"/>
</dbReference>
<dbReference type="Pfam" id="PF10590">
    <property type="entry name" value="PNP_phzG_C"/>
    <property type="match status" value="1"/>
</dbReference>
<dbReference type="Pfam" id="PF01243">
    <property type="entry name" value="PNPOx_N"/>
    <property type="match status" value="1"/>
</dbReference>
<dbReference type="PIRSF" id="PIRSF000190">
    <property type="entry name" value="Pyd_amn-ph_oxd"/>
    <property type="match status" value="1"/>
</dbReference>
<dbReference type="SUPFAM" id="SSF50475">
    <property type="entry name" value="FMN-binding split barrel"/>
    <property type="match status" value="1"/>
</dbReference>
<dbReference type="PROSITE" id="PS01064">
    <property type="entry name" value="PYRIDOX_OXIDASE"/>
    <property type="match status" value="1"/>
</dbReference>
<keyword id="KW-0285">Flavoprotein</keyword>
<keyword id="KW-0288">FMN</keyword>
<keyword id="KW-0560">Oxidoreductase</keyword>
<keyword id="KW-0664">Pyridoxine biosynthesis</keyword>
<accession>B1IQB6</accession>
<protein>
    <recommendedName>
        <fullName evidence="1">Pyridoxine/pyridoxamine 5'-phosphate oxidase</fullName>
        <ecNumber evidence="1">1.4.3.5</ecNumber>
    </recommendedName>
    <alternativeName>
        <fullName evidence="1">PNP/PMP oxidase</fullName>
        <shortName evidence="1">PNPOx</shortName>
    </alternativeName>
    <alternativeName>
        <fullName evidence="1">Pyridoxal 5'-phosphate synthase</fullName>
    </alternativeName>
</protein>
<organism>
    <name type="scientific">Escherichia coli (strain ATCC 8739 / DSM 1576 / NBRC 3972 / NCIMB 8545 / WDCM 00012 / Crooks)</name>
    <dbReference type="NCBI Taxonomy" id="481805"/>
    <lineage>
        <taxon>Bacteria</taxon>
        <taxon>Pseudomonadati</taxon>
        <taxon>Pseudomonadota</taxon>
        <taxon>Gammaproteobacteria</taxon>
        <taxon>Enterobacterales</taxon>
        <taxon>Enterobacteriaceae</taxon>
        <taxon>Escherichia</taxon>
    </lineage>
</organism>
<gene>
    <name evidence="1" type="primary">pdxH</name>
    <name type="ordered locus">EcolC_1991</name>
</gene>
<sequence>MSDNDELQQIAHLRREYTKGGLRRRDLPADPLTLFERWLSQACEAKLADPTAMVVATVDEHGQPYQRIVLLKHYDEKGMVFYTNLGSRKAHQIENNPRVSLLFPWHTLERQVMVIGKAERLSTLEVMKYFHSRPRDSQIGAWVSKQSSRISARGILESKFLELKQKFQQGEVPLPSFWGGFRVSLEQIEFWQGGEHRLHDRFLYQRENDAWKIDRLAP</sequence>
<comment type="function">
    <text evidence="1">Catalyzes the oxidation of either pyridoxine 5'-phosphate (PNP) or pyridoxamine 5'-phosphate (PMP) into pyridoxal 5'-phosphate (PLP).</text>
</comment>
<comment type="catalytic activity">
    <reaction evidence="1">
        <text>pyridoxamine 5'-phosphate + O2 + H2O = pyridoxal 5'-phosphate + H2O2 + NH4(+)</text>
        <dbReference type="Rhea" id="RHEA:15817"/>
        <dbReference type="ChEBI" id="CHEBI:15377"/>
        <dbReference type="ChEBI" id="CHEBI:15379"/>
        <dbReference type="ChEBI" id="CHEBI:16240"/>
        <dbReference type="ChEBI" id="CHEBI:28938"/>
        <dbReference type="ChEBI" id="CHEBI:58451"/>
        <dbReference type="ChEBI" id="CHEBI:597326"/>
        <dbReference type="EC" id="1.4.3.5"/>
    </reaction>
</comment>
<comment type="catalytic activity">
    <reaction evidence="1">
        <text>pyridoxine 5'-phosphate + O2 = pyridoxal 5'-phosphate + H2O2</text>
        <dbReference type="Rhea" id="RHEA:15149"/>
        <dbReference type="ChEBI" id="CHEBI:15379"/>
        <dbReference type="ChEBI" id="CHEBI:16240"/>
        <dbReference type="ChEBI" id="CHEBI:58589"/>
        <dbReference type="ChEBI" id="CHEBI:597326"/>
        <dbReference type="EC" id="1.4.3.5"/>
    </reaction>
</comment>
<comment type="cofactor">
    <cofactor evidence="1">
        <name>FMN</name>
        <dbReference type="ChEBI" id="CHEBI:58210"/>
    </cofactor>
    <text evidence="1">Binds 1 FMN per subunit.</text>
</comment>
<comment type="pathway">
    <text evidence="1">Cofactor metabolism; pyridoxal 5'-phosphate salvage; pyridoxal 5'-phosphate from pyridoxamine 5'-phosphate: step 1/1.</text>
</comment>
<comment type="pathway">
    <text evidence="1">Cofactor metabolism; pyridoxal 5'-phosphate salvage; pyridoxal 5'-phosphate from pyridoxine 5'-phosphate: step 1/1.</text>
</comment>
<comment type="subunit">
    <text evidence="1">Homodimer.</text>
</comment>
<comment type="similarity">
    <text evidence="1">Belongs to the pyridoxamine 5'-phosphate oxidase family.</text>
</comment>
<name>PDXH_ECOLC</name>
<evidence type="ECO:0000255" key="1">
    <source>
        <dbReference type="HAMAP-Rule" id="MF_01629"/>
    </source>
</evidence>
<proteinExistence type="inferred from homology"/>
<reference key="1">
    <citation type="submission" date="2008-02" db="EMBL/GenBank/DDBJ databases">
        <title>Complete sequence of Escherichia coli C str. ATCC 8739.</title>
        <authorList>
            <person name="Copeland A."/>
            <person name="Lucas S."/>
            <person name="Lapidus A."/>
            <person name="Glavina del Rio T."/>
            <person name="Dalin E."/>
            <person name="Tice H."/>
            <person name="Bruce D."/>
            <person name="Goodwin L."/>
            <person name="Pitluck S."/>
            <person name="Kiss H."/>
            <person name="Brettin T."/>
            <person name="Detter J.C."/>
            <person name="Han C."/>
            <person name="Kuske C.R."/>
            <person name="Schmutz J."/>
            <person name="Larimer F."/>
            <person name="Land M."/>
            <person name="Hauser L."/>
            <person name="Kyrpides N."/>
            <person name="Mikhailova N."/>
            <person name="Ingram L."/>
            <person name="Richardson P."/>
        </authorList>
    </citation>
    <scope>NUCLEOTIDE SEQUENCE [LARGE SCALE GENOMIC DNA]</scope>
    <source>
        <strain>ATCC 8739 / DSM 1576 / NBRC 3972 / NCIMB 8545 / WDCM 00012 / Crooks</strain>
    </source>
</reference>
<feature type="chain" id="PRO_1000088113" description="Pyridoxine/pyridoxamine 5'-phosphate oxidase">
    <location>
        <begin position="1"/>
        <end position="218"/>
    </location>
</feature>
<feature type="binding site" evidence="1">
    <location>
        <begin position="14"/>
        <end position="17"/>
    </location>
    <ligand>
        <name>substrate</name>
    </ligand>
</feature>
<feature type="binding site" evidence="1">
    <location>
        <begin position="67"/>
        <end position="72"/>
    </location>
    <ligand>
        <name>FMN</name>
        <dbReference type="ChEBI" id="CHEBI:58210"/>
    </ligand>
</feature>
<feature type="binding site" evidence="1">
    <location>
        <position position="72"/>
    </location>
    <ligand>
        <name>substrate</name>
    </ligand>
</feature>
<feature type="binding site" evidence="1">
    <location>
        <begin position="82"/>
        <end position="83"/>
    </location>
    <ligand>
        <name>FMN</name>
        <dbReference type="ChEBI" id="CHEBI:58210"/>
    </ligand>
</feature>
<feature type="binding site" evidence="1">
    <location>
        <position position="88"/>
    </location>
    <ligand>
        <name>FMN</name>
        <dbReference type="ChEBI" id="CHEBI:58210"/>
    </ligand>
</feature>
<feature type="binding site" evidence="1">
    <location>
        <position position="89"/>
    </location>
    <ligand>
        <name>FMN</name>
        <dbReference type="ChEBI" id="CHEBI:58210"/>
    </ligand>
</feature>
<feature type="binding site" evidence="1">
    <location>
        <position position="111"/>
    </location>
    <ligand>
        <name>FMN</name>
        <dbReference type="ChEBI" id="CHEBI:58210"/>
    </ligand>
</feature>
<feature type="binding site" evidence="1">
    <location>
        <position position="129"/>
    </location>
    <ligand>
        <name>substrate</name>
    </ligand>
</feature>
<feature type="binding site" evidence="1">
    <location>
        <position position="133"/>
    </location>
    <ligand>
        <name>substrate</name>
    </ligand>
</feature>
<feature type="binding site" evidence="1">
    <location>
        <position position="137"/>
    </location>
    <ligand>
        <name>substrate</name>
    </ligand>
</feature>
<feature type="binding site" evidence="1">
    <location>
        <begin position="146"/>
        <end position="147"/>
    </location>
    <ligand>
        <name>FMN</name>
        <dbReference type="ChEBI" id="CHEBI:58210"/>
    </ligand>
</feature>
<feature type="binding site" evidence="1">
    <location>
        <position position="191"/>
    </location>
    <ligand>
        <name>FMN</name>
        <dbReference type="ChEBI" id="CHEBI:58210"/>
    </ligand>
</feature>
<feature type="binding site" evidence="1">
    <location>
        <begin position="197"/>
        <end position="199"/>
    </location>
    <ligand>
        <name>substrate</name>
    </ligand>
</feature>
<feature type="binding site" evidence="1">
    <location>
        <position position="201"/>
    </location>
    <ligand>
        <name>FMN</name>
        <dbReference type="ChEBI" id="CHEBI:58210"/>
    </ligand>
</feature>